<organism>
    <name type="scientific">Cronobacter sakazakii (strain ATCC BAA-894)</name>
    <name type="common">Enterobacter sakazakii</name>
    <dbReference type="NCBI Taxonomy" id="290339"/>
    <lineage>
        <taxon>Bacteria</taxon>
        <taxon>Pseudomonadati</taxon>
        <taxon>Pseudomonadota</taxon>
        <taxon>Gammaproteobacteria</taxon>
        <taxon>Enterobacterales</taxon>
        <taxon>Enterobacteriaceae</taxon>
        <taxon>Cronobacter</taxon>
    </lineage>
</organism>
<reference key="1">
    <citation type="journal article" date="2010" name="PLoS ONE">
        <title>Genome sequence of Cronobacter sakazakii BAA-894 and comparative genomic hybridization analysis with other Cronobacter species.</title>
        <authorList>
            <person name="Kucerova E."/>
            <person name="Clifton S.W."/>
            <person name="Xia X.Q."/>
            <person name="Long F."/>
            <person name="Porwollik S."/>
            <person name="Fulton L."/>
            <person name="Fronick C."/>
            <person name="Minx P."/>
            <person name="Kyung K."/>
            <person name="Warren W."/>
            <person name="Fulton R."/>
            <person name="Feng D."/>
            <person name="Wollam A."/>
            <person name="Shah N."/>
            <person name="Bhonagiri V."/>
            <person name="Nash W.E."/>
            <person name="Hallsworth-Pepin K."/>
            <person name="Wilson R.K."/>
            <person name="McClelland M."/>
            <person name="Forsythe S.J."/>
        </authorList>
    </citation>
    <scope>NUCLEOTIDE SEQUENCE [LARGE SCALE GENOMIC DNA]</scope>
    <source>
        <strain>ATCC BAA-894</strain>
    </source>
</reference>
<keyword id="KW-0067">ATP-binding</keyword>
<keyword id="KW-0131">Cell cycle</keyword>
<keyword id="KW-0132">Cell division</keyword>
<keyword id="KW-0159">Chromosome partition</keyword>
<keyword id="KW-0175">Coiled coil</keyword>
<keyword id="KW-0963">Cytoplasm</keyword>
<keyword id="KW-0226">DNA condensation</keyword>
<keyword id="KW-0238">DNA-binding</keyword>
<keyword id="KW-0547">Nucleotide-binding</keyword>
<keyword id="KW-1185">Reference proteome</keyword>
<protein>
    <recommendedName>
        <fullName evidence="1">Chromosome partition protein MukB</fullName>
    </recommendedName>
    <alternativeName>
        <fullName evidence="1">Structural maintenance of chromosome-related protein</fullName>
    </alternativeName>
</protein>
<accession>A7MEV9</accession>
<gene>
    <name evidence="1" type="primary">mukB</name>
    <name type="ordered locus">ESA_02418</name>
</gene>
<proteinExistence type="inferred from homology"/>
<dbReference type="EMBL" id="CP000783">
    <property type="protein sequence ID" value="ABU77664.1"/>
    <property type="molecule type" value="Genomic_DNA"/>
</dbReference>
<dbReference type="RefSeq" id="WP_012125205.1">
    <property type="nucleotide sequence ID" value="NC_009778.1"/>
</dbReference>
<dbReference type="SMR" id="A7MEV9"/>
<dbReference type="KEGG" id="esa:ESA_02418"/>
<dbReference type="PATRIC" id="fig|290339.8.peg.2148"/>
<dbReference type="HOGENOM" id="CLU_004430_0_0_6"/>
<dbReference type="Proteomes" id="UP000000260">
    <property type="component" value="Chromosome"/>
</dbReference>
<dbReference type="GO" id="GO:0005737">
    <property type="term" value="C:cytoplasm"/>
    <property type="evidence" value="ECO:0007669"/>
    <property type="project" value="UniProtKB-UniRule"/>
</dbReference>
<dbReference type="GO" id="GO:0009295">
    <property type="term" value="C:nucleoid"/>
    <property type="evidence" value="ECO:0007669"/>
    <property type="project" value="UniProtKB-SubCell"/>
</dbReference>
<dbReference type="GO" id="GO:0005524">
    <property type="term" value="F:ATP binding"/>
    <property type="evidence" value="ECO:0007669"/>
    <property type="project" value="UniProtKB-UniRule"/>
</dbReference>
<dbReference type="GO" id="GO:0003677">
    <property type="term" value="F:DNA binding"/>
    <property type="evidence" value="ECO:0007669"/>
    <property type="project" value="UniProtKB-UniRule"/>
</dbReference>
<dbReference type="GO" id="GO:0051301">
    <property type="term" value="P:cell division"/>
    <property type="evidence" value="ECO:0007669"/>
    <property type="project" value="UniProtKB-KW"/>
</dbReference>
<dbReference type="GO" id="GO:0030261">
    <property type="term" value="P:chromosome condensation"/>
    <property type="evidence" value="ECO:0007669"/>
    <property type="project" value="UniProtKB-KW"/>
</dbReference>
<dbReference type="GO" id="GO:0007059">
    <property type="term" value="P:chromosome segregation"/>
    <property type="evidence" value="ECO:0007669"/>
    <property type="project" value="UniProtKB-UniRule"/>
</dbReference>
<dbReference type="GO" id="GO:0006260">
    <property type="term" value="P:DNA replication"/>
    <property type="evidence" value="ECO:0007669"/>
    <property type="project" value="UniProtKB-UniRule"/>
</dbReference>
<dbReference type="FunFam" id="3.30.70.3500:FF:000001">
    <property type="entry name" value="Chromosome partition protein MukB"/>
    <property type="match status" value="1"/>
</dbReference>
<dbReference type="FunFam" id="3.40.1140.10:FF:000001">
    <property type="entry name" value="Chromosome partition protein MukB"/>
    <property type="match status" value="1"/>
</dbReference>
<dbReference type="FunFam" id="3.40.1140.10:FF:000002">
    <property type="entry name" value="Chromosome partition protein MukB"/>
    <property type="match status" value="1"/>
</dbReference>
<dbReference type="Gene3D" id="1.20.58.850">
    <property type="match status" value="1"/>
</dbReference>
<dbReference type="Gene3D" id="3.40.1140.10">
    <property type="match status" value="2"/>
</dbReference>
<dbReference type="Gene3D" id="1.20.5.420">
    <property type="entry name" value="Immunoglobulin FC, subunit C"/>
    <property type="match status" value="1"/>
</dbReference>
<dbReference type="Gene3D" id="3.30.70.3500">
    <property type="entry name" value="MukB, hinge domain"/>
    <property type="match status" value="1"/>
</dbReference>
<dbReference type="HAMAP" id="MF_01800">
    <property type="entry name" value="MukB"/>
    <property type="match status" value="1"/>
</dbReference>
<dbReference type="InterPro" id="IPR012090">
    <property type="entry name" value="MukB"/>
</dbReference>
<dbReference type="InterPro" id="IPR050308">
    <property type="entry name" value="MukB/SMC"/>
</dbReference>
<dbReference type="InterPro" id="IPR032520">
    <property type="entry name" value="MukB_hinge"/>
</dbReference>
<dbReference type="InterPro" id="IPR042501">
    <property type="entry name" value="MukB_hinge_sf"/>
</dbReference>
<dbReference type="InterPro" id="IPR007406">
    <property type="entry name" value="MukB_N_dom"/>
</dbReference>
<dbReference type="InterPro" id="IPR027417">
    <property type="entry name" value="P-loop_NTPase"/>
</dbReference>
<dbReference type="NCBIfam" id="NF003422">
    <property type="entry name" value="PRK04863.1"/>
    <property type="match status" value="1"/>
</dbReference>
<dbReference type="PANTHER" id="PTHR42963">
    <property type="entry name" value="CHROMOSOME PARTITION PROTEIN MUKB"/>
    <property type="match status" value="1"/>
</dbReference>
<dbReference type="PANTHER" id="PTHR42963:SF1">
    <property type="entry name" value="DUF4476 DOMAIN-CONTAINING PROTEIN"/>
    <property type="match status" value="1"/>
</dbReference>
<dbReference type="Pfam" id="PF04310">
    <property type="entry name" value="MukB"/>
    <property type="match status" value="1"/>
</dbReference>
<dbReference type="Pfam" id="PF16330">
    <property type="entry name" value="MukB_hinge"/>
    <property type="match status" value="1"/>
</dbReference>
<dbReference type="Pfam" id="PF13558">
    <property type="entry name" value="SbcC_Walker_B"/>
    <property type="match status" value="1"/>
</dbReference>
<dbReference type="PIRSF" id="PIRSF005246">
    <property type="entry name" value="MukB"/>
    <property type="match status" value="1"/>
</dbReference>
<dbReference type="SUPFAM" id="SSF52540">
    <property type="entry name" value="P-loop containing nucleoside triphosphate hydrolases"/>
    <property type="match status" value="2"/>
</dbReference>
<name>MUKB_CROS8</name>
<evidence type="ECO:0000255" key="1">
    <source>
        <dbReference type="HAMAP-Rule" id="MF_01800"/>
    </source>
</evidence>
<evidence type="ECO:0000256" key="2">
    <source>
        <dbReference type="SAM" id="MobiDB-lite"/>
    </source>
</evidence>
<comment type="function">
    <text evidence="1">Plays a central role in chromosome condensation, segregation and cell cycle progression. Functions as a homodimer, which is essential for chromosome partition. Involved in negative DNA supercoiling in vivo, and by this means organize and compact chromosomes. May achieve or facilitate chromosome segregation by condensation DNA from both sides of a centrally located replisome during cell division.</text>
</comment>
<comment type="subunit">
    <text evidence="1">Homodimerization via its hinge domain. Binds to DNA via its C-terminal region. Interacts, and probably forms a ternary complex, with MukE and MukF via its C-terminal region. The complex formation is stimulated by calcium or magnesium. Interacts with tubulin-related protein FtsZ.</text>
</comment>
<comment type="subcellular location">
    <subcellularLocation>
        <location evidence="1">Cytoplasm</location>
        <location evidence="1">Nucleoid</location>
    </subcellularLocation>
    <text evidence="1">Restricted to the nucleoid region.</text>
</comment>
<comment type="domain">
    <text evidence="1">The hinge domain, which separates the large intramolecular coiled coil regions, allows the homodimerization, forming a V-shaped homodimer.</text>
</comment>
<comment type="similarity">
    <text evidence="1">Belongs to the SMC family. MukB subfamily.</text>
</comment>
<feature type="chain" id="PRO_1000069907" description="Chromosome partition protein MukB">
    <location>
        <begin position="1"/>
        <end position="1482"/>
    </location>
</feature>
<feature type="region of interest" description="Flexible hinge" evidence="1">
    <location>
        <begin position="666"/>
        <end position="783"/>
    </location>
</feature>
<feature type="region of interest" description="Disordered" evidence="2">
    <location>
        <begin position="1049"/>
        <end position="1077"/>
    </location>
</feature>
<feature type="coiled-coil region" evidence="1">
    <location>
        <begin position="337"/>
        <end position="418"/>
    </location>
</feature>
<feature type="coiled-coil region" evidence="1">
    <location>
        <begin position="444"/>
        <end position="472"/>
    </location>
</feature>
<feature type="coiled-coil region" evidence="1">
    <location>
        <begin position="509"/>
        <end position="601"/>
    </location>
</feature>
<feature type="coiled-coil region" evidence="1">
    <location>
        <begin position="781"/>
        <end position="805"/>
    </location>
</feature>
<feature type="coiled-coil region" evidence="1">
    <location>
        <begin position="835"/>
        <end position="1116"/>
    </location>
</feature>
<feature type="coiled-coil region" evidence="1">
    <location>
        <begin position="1210"/>
        <end position="1265"/>
    </location>
</feature>
<feature type="compositionally biased region" description="Basic and acidic residues" evidence="2">
    <location>
        <begin position="1051"/>
        <end position="1066"/>
    </location>
</feature>
<feature type="binding site" evidence="1">
    <location>
        <begin position="34"/>
        <end position="41"/>
    </location>
    <ligand>
        <name>ATP</name>
        <dbReference type="ChEBI" id="CHEBI:30616"/>
    </ligand>
</feature>
<sequence>MIERGKFRSLTLINWNGFFARTFDLDELVTTLSGGNGAGKSTTMAAFVTALIPDLTLLHFRNTTEAGATSGSRDKGLHGKLKAGVCYSVLDVVNSRHQRVLVGVRLQQVAGRDRKVDIKPFAIQGLPSAILPTQLLTETLNDRQARVLSLNELKDKIDTMEGVQLKQFNSITDYHSLMFDLGVVARRLRSASDRSKYYRLIEASLYGGISSAITRSLRDYLLPENGGVRKAFQDMEAALRENRMTLEAIRVTQSDRDLFKHLISEATNYVAADYMRHANERRIHLDQALELRRELFSSRKQLAAEQYKHVHMARELSEHAGAEGDLETDYQAASDHLNLVQTALRQQEKIERYEADLEELQIRLEEQSEVVAEAAEQQEENEARAEAAELEVDELKSQLADYQQALDVQQTRAIQYQQALTALERARELCHLPDLSADSADEWLDTYQAKEQEATERLLSLEQKMSVAQTAHSQFEQAYQLVASINGPVSRAEAWDVARELLRDASQQRHLAEQVQPLRMRLSELEQRLREQQDAERLLAEFCKRQGKNYDPEDLEALNDELEARIAALSDSVSQAGEQRMTLRQELEQIQSRVKTLTSHAPAWLAAQNSLNQISEQSGETFESGQQVTEYLQQLLEREREAIVERDEVGARKRAVDEEIERLSQPGGAEDARLNALAERFGGVLLSEIYDDVSFDDAPYFSALYGPSRHAIVVPDLSRVRDLLDGLEDCPEDLYLIEGDPQSFDDSVFSVEELEKAVVVKVAERQWRYSRFPSVPLFGRAARESRIESLHAEREALSERYATLSFDVQKTQRLHQAFSRFVGQHLAVAFEADPEAEIRKLNTRRSEIERAISQHENDNQQQRVQFEQAKEGVAQLNRLLPRLSLLADDSLADRVEEIQERLAEAQDAARFLSQHGKALAKLEPVASVLQSDPEQFDQLKQDYEQARQTQRDARQQAFALSEVVQRRAHFSYSDSAQMLNGNTDLNEKLRQRLEQAEAERTRAREALRTHAAKLSQYHQVLASLKSSFDTKKELLGDLQRELQDIGVRADAGAEERARQRRDELHTRLSNNRSRRNQLEKQLTLCEAEMDNLTRSLKRLERNYHEMREQVVSAKAGWCAVMRMVKDNGVERRLHRRELAYHSGDDLRSMSDKALGALRLAVADNEHLRDVLRLSEDPKRPERKIQFFVAVYQHLRERIRQDIIRTDDPVEAIEQMEIELGRLTEELTSREQKLAISSRSVANIIRKTIQREQNRIRMLNQGLQSVSFGQVNSVRLNVNVRESHATLLEVLAEQHEQHQDLFNSNRLTFSEALAKLWQRLNPQIDMGQRTAQTIGEELLDYRNYLEMEVEVNRGSDGWLRAESGALSTGEAIGTGMSILVMVVQSWEDESSRLRGKDISPCRLLFLDEAARLDARSIATLFELCERLQMQLIIAAPENISPEKGTTYKLVRKVFQNHEHVHVVGLRGFAAPPADALPGPAEVS</sequence>